<feature type="chain" id="PRO_0000363272" description="Probable protein phosphatase 2C 26">
    <location>
        <begin position="1"/>
        <end position="596"/>
    </location>
</feature>
<feature type="domain" description="PPM-type phosphatase" evidence="2">
    <location>
        <begin position="177"/>
        <end position="584"/>
    </location>
</feature>
<feature type="region of interest" description="Disordered" evidence="3">
    <location>
        <begin position="122"/>
        <end position="154"/>
    </location>
</feature>
<feature type="binding site" evidence="1">
    <location>
        <position position="212"/>
    </location>
    <ligand>
        <name>Mn(2+)</name>
        <dbReference type="ChEBI" id="CHEBI:29035"/>
        <label>1</label>
    </ligand>
</feature>
<feature type="binding site" evidence="1">
    <location>
        <position position="212"/>
    </location>
    <ligand>
        <name>Mn(2+)</name>
        <dbReference type="ChEBI" id="CHEBI:29035"/>
        <label>2</label>
    </ligand>
</feature>
<feature type="binding site" evidence="1">
    <location>
        <position position="213"/>
    </location>
    <ligand>
        <name>Mn(2+)</name>
        <dbReference type="ChEBI" id="CHEBI:29035"/>
        <label>1</label>
    </ligand>
</feature>
<feature type="binding site" evidence="1">
    <location>
        <position position="512"/>
    </location>
    <ligand>
        <name>Mn(2+)</name>
        <dbReference type="ChEBI" id="CHEBI:29035"/>
        <label>2</label>
    </ligand>
</feature>
<feature type="binding site" evidence="1">
    <location>
        <position position="575"/>
    </location>
    <ligand>
        <name>Mn(2+)</name>
        <dbReference type="ChEBI" id="CHEBI:29035"/>
        <label>2</label>
    </ligand>
</feature>
<reference key="1">
    <citation type="journal article" date="2005" name="Nature">
        <title>The map-based sequence of the rice genome.</title>
        <authorList>
            <consortium name="International rice genome sequencing project (IRGSP)"/>
        </authorList>
    </citation>
    <scope>NUCLEOTIDE SEQUENCE [LARGE SCALE GENOMIC DNA]</scope>
    <source>
        <strain>cv. Nipponbare</strain>
    </source>
</reference>
<reference key="2">
    <citation type="journal article" date="2008" name="Nucleic Acids Res.">
        <title>The rice annotation project database (RAP-DB): 2008 update.</title>
        <authorList>
            <consortium name="The rice annotation project (RAP)"/>
        </authorList>
    </citation>
    <scope>GENOME REANNOTATION</scope>
    <source>
        <strain>cv. Nipponbare</strain>
    </source>
</reference>
<reference key="3">
    <citation type="journal article" date="2013" name="Rice">
        <title>Improvement of the Oryza sativa Nipponbare reference genome using next generation sequence and optical map data.</title>
        <authorList>
            <person name="Kawahara Y."/>
            <person name="de la Bastide M."/>
            <person name="Hamilton J.P."/>
            <person name="Kanamori H."/>
            <person name="McCombie W.R."/>
            <person name="Ouyang S."/>
            <person name="Schwartz D.C."/>
            <person name="Tanaka T."/>
            <person name="Wu J."/>
            <person name="Zhou S."/>
            <person name="Childs K.L."/>
            <person name="Davidson R.M."/>
            <person name="Lin H."/>
            <person name="Quesada-Ocampo L."/>
            <person name="Vaillancourt B."/>
            <person name="Sakai H."/>
            <person name="Lee S.S."/>
            <person name="Kim J."/>
            <person name="Numa H."/>
            <person name="Itoh T."/>
            <person name="Buell C.R."/>
            <person name="Matsumoto T."/>
        </authorList>
    </citation>
    <scope>GENOME REANNOTATION</scope>
    <source>
        <strain>cv. Nipponbare</strain>
    </source>
</reference>
<reference key="4">
    <citation type="journal article" date="2005" name="PLoS Biol.">
        <title>The genomes of Oryza sativa: a history of duplications.</title>
        <authorList>
            <person name="Yu J."/>
            <person name="Wang J."/>
            <person name="Lin W."/>
            <person name="Li S."/>
            <person name="Li H."/>
            <person name="Zhou J."/>
            <person name="Ni P."/>
            <person name="Dong W."/>
            <person name="Hu S."/>
            <person name="Zeng C."/>
            <person name="Zhang J."/>
            <person name="Zhang Y."/>
            <person name="Li R."/>
            <person name="Xu Z."/>
            <person name="Li S."/>
            <person name="Li X."/>
            <person name="Zheng H."/>
            <person name="Cong L."/>
            <person name="Lin L."/>
            <person name="Yin J."/>
            <person name="Geng J."/>
            <person name="Li G."/>
            <person name="Shi J."/>
            <person name="Liu J."/>
            <person name="Lv H."/>
            <person name="Li J."/>
            <person name="Wang J."/>
            <person name="Deng Y."/>
            <person name="Ran L."/>
            <person name="Shi X."/>
            <person name="Wang X."/>
            <person name="Wu Q."/>
            <person name="Li C."/>
            <person name="Ren X."/>
            <person name="Wang J."/>
            <person name="Wang X."/>
            <person name="Li D."/>
            <person name="Liu D."/>
            <person name="Zhang X."/>
            <person name="Ji Z."/>
            <person name="Zhao W."/>
            <person name="Sun Y."/>
            <person name="Zhang Z."/>
            <person name="Bao J."/>
            <person name="Han Y."/>
            <person name="Dong L."/>
            <person name="Ji J."/>
            <person name="Chen P."/>
            <person name="Wu S."/>
            <person name="Liu J."/>
            <person name="Xiao Y."/>
            <person name="Bu D."/>
            <person name="Tan J."/>
            <person name="Yang L."/>
            <person name="Ye C."/>
            <person name="Zhang J."/>
            <person name="Xu J."/>
            <person name="Zhou Y."/>
            <person name="Yu Y."/>
            <person name="Zhang B."/>
            <person name="Zhuang S."/>
            <person name="Wei H."/>
            <person name="Liu B."/>
            <person name="Lei M."/>
            <person name="Yu H."/>
            <person name="Li Y."/>
            <person name="Xu H."/>
            <person name="Wei S."/>
            <person name="He X."/>
            <person name="Fang L."/>
            <person name="Zhang Z."/>
            <person name="Zhang Y."/>
            <person name="Huang X."/>
            <person name="Su Z."/>
            <person name="Tong W."/>
            <person name="Li J."/>
            <person name="Tong Z."/>
            <person name="Li S."/>
            <person name="Ye J."/>
            <person name="Wang L."/>
            <person name="Fang L."/>
            <person name="Lei T."/>
            <person name="Chen C.-S."/>
            <person name="Chen H.-C."/>
            <person name="Xu Z."/>
            <person name="Li H."/>
            <person name="Huang H."/>
            <person name="Zhang F."/>
            <person name="Xu H."/>
            <person name="Li N."/>
            <person name="Zhao C."/>
            <person name="Li S."/>
            <person name="Dong L."/>
            <person name="Huang Y."/>
            <person name="Li L."/>
            <person name="Xi Y."/>
            <person name="Qi Q."/>
            <person name="Li W."/>
            <person name="Zhang B."/>
            <person name="Hu W."/>
            <person name="Zhang Y."/>
            <person name="Tian X."/>
            <person name="Jiao Y."/>
            <person name="Liang X."/>
            <person name="Jin J."/>
            <person name="Gao L."/>
            <person name="Zheng W."/>
            <person name="Hao B."/>
            <person name="Liu S.-M."/>
            <person name="Wang W."/>
            <person name="Yuan L."/>
            <person name="Cao M."/>
            <person name="McDermott J."/>
            <person name="Samudrala R."/>
            <person name="Wang J."/>
            <person name="Wong G.K.-S."/>
            <person name="Yang H."/>
        </authorList>
    </citation>
    <scope>NUCLEOTIDE SEQUENCE [LARGE SCALE GENOMIC DNA]</scope>
    <source>
        <strain>cv. Nipponbare</strain>
    </source>
</reference>
<reference key="5">
    <citation type="journal article" date="2003" name="Science">
        <title>Collection, mapping, and annotation of over 28,000 cDNA clones from japonica rice.</title>
        <authorList>
            <consortium name="The rice full-length cDNA consortium"/>
        </authorList>
    </citation>
    <scope>NUCLEOTIDE SEQUENCE [LARGE SCALE MRNA]</scope>
    <source>
        <strain>cv. Nipponbare</strain>
    </source>
</reference>
<reference key="6">
    <citation type="journal article" date="2008" name="BMC Genomics">
        <title>Genome-wide and expression analysis of protein phosphatase 2C in rice and Arabidopsis.</title>
        <authorList>
            <person name="Xue T."/>
            <person name="Wang D."/>
            <person name="Zhang S."/>
            <person name="Ehlting J."/>
            <person name="Ni F."/>
            <person name="Jacab S."/>
            <person name="Zheng C."/>
            <person name="Zhong Y."/>
        </authorList>
    </citation>
    <scope>GENE FAMILY</scope>
    <scope>NOMENCLATURE</scope>
</reference>
<dbReference type="EC" id="3.1.3.16"/>
<dbReference type="EMBL" id="AP004096">
    <property type="protein sequence ID" value="BAD07681.1"/>
    <property type="molecule type" value="Genomic_DNA"/>
</dbReference>
<dbReference type="EMBL" id="AP008208">
    <property type="protein sequence ID" value="BAF09705.1"/>
    <property type="molecule type" value="Genomic_DNA"/>
</dbReference>
<dbReference type="EMBL" id="AP014958">
    <property type="protein sequence ID" value="BAS80377.1"/>
    <property type="molecule type" value="Genomic_DNA"/>
</dbReference>
<dbReference type="EMBL" id="CM000139">
    <property type="protein sequence ID" value="EAZ24242.1"/>
    <property type="molecule type" value="Genomic_DNA"/>
</dbReference>
<dbReference type="EMBL" id="AK101521">
    <property type="protein sequence ID" value="BAG95099.1"/>
    <property type="molecule type" value="mRNA"/>
</dbReference>
<dbReference type="RefSeq" id="XP_015626934.1">
    <property type="nucleotide sequence ID" value="XM_015771448.1"/>
</dbReference>
<dbReference type="SMR" id="Q6ZGY0"/>
<dbReference type="FunCoup" id="Q6ZGY0">
    <property type="interactions" value="75"/>
</dbReference>
<dbReference type="STRING" id="39947.Q6ZGY0"/>
<dbReference type="PaxDb" id="39947-Q6ZGY0"/>
<dbReference type="EnsemblPlants" id="Os02t0690500-01">
    <property type="protein sequence ID" value="Os02t0690500-01"/>
    <property type="gene ID" value="Os02g0690500"/>
</dbReference>
<dbReference type="Gramene" id="Os02t0690500-01">
    <property type="protein sequence ID" value="Os02t0690500-01"/>
    <property type="gene ID" value="Os02g0690500"/>
</dbReference>
<dbReference type="KEGG" id="dosa:Os02g0690500"/>
<dbReference type="eggNOG" id="KOG0700">
    <property type="taxonomic scope" value="Eukaryota"/>
</dbReference>
<dbReference type="HOGENOM" id="CLU_013173_12_1_1"/>
<dbReference type="InParanoid" id="Q6ZGY0"/>
<dbReference type="OMA" id="EDGVQWA"/>
<dbReference type="OrthoDB" id="420076at2759"/>
<dbReference type="Proteomes" id="UP000000763">
    <property type="component" value="Chromosome 2"/>
</dbReference>
<dbReference type="Proteomes" id="UP000007752">
    <property type="component" value="Chromosome 2"/>
</dbReference>
<dbReference type="Proteomes" id="UP000059680">
    <property type="component" value="Chromosome 2"/>
</dbReference>
<dbReference type="GO" id="GO:0046872">
    <property type="term" value="F:metal ion binding"/>
    <property type="evidence" value="ECO:0007669"/>
    <property type="project" value="UniProtKB-KW"/>
</dbReference>
<dbReference type="GO" id="GO:0004722">
    <property type="term" value="F:protein serine/threonine phosphatase activity"/>
    <property type="evidence" value="ECO:0007669"/>
    <property type="project" value="UniProtKB-EC"/>
</dbReference>
<dbReference type="GO" id="GO:0007165">
    <property type="term" value="P:signal transduction"/>
    <property type="evidence" value="ECO:0000318"/>
    <property type="project" value="GO_Central"/>
</dbReference>
<dbReference type="CDD" id="cd00143">
    <property type="entry name" value="PP2Cc"/>
    <property type="match status" value="1"/>
</dbReference>
<dbReference type="FunFam" id="3.60.40.10:FF:000053">
    <property type="entry name" value="Protein phosphatase 2C 29"/>
    <property type="match status" value="1"/>
</dbReference>
<dbReference type="Gene3D" id="3.60.40.10">
    <property type="entry name" value="PPM-type phosphatase domain"/>
    <property type="match status" value="1"/>
</dbReference>
<dbReference type="InterPro" id="IPR015655">
    <property type="entry name" value="PP2C"/>
</dbReference>
<dbReference type="InterPro" id="IPR036457">
    <property type="entry name" value="PPM-type-like_dom_sf"/>
</dbReference>
<dbReference type="InterPro" id="IPR001932">
    <property type="entry name" value="PPM-type_phosphatase-like_dom"/>
</dbReference>
<dbReference type="PANTHER" id="PTHR13832">
    <property type="entry name" value="PROTEIN PHOSPHATASE 2C"/>
    <property type="match status" value="1"/>
</dbReference>
<dbReference type="PANTHER" id="PTHR13832:SF301">
    <property type="entry name" value="PROTEIN PHOSPHATASE 2C 29"/>
    <property type="match status" value="1"/>
</dbReference>
<dbReference type="Pfam" id="PF00481">
    <property type="entry name" value="PP2C"/>
    <property type="match status" value="1"/>
</dbReference>
<dbReference type="SMART" id="SM00332">
    <property type="entry name" value="PP2Cc"/>
    <property type="match status" value="1"/>
</dbReference>
<dbReference type="SUPFAM" id="SSF81606">
    <property type="entry name" value="PP2C-like"/>
    <property type="match status" value="1"/>
</dbReference>
<dbReference type="PROSITE" id="PS51746">
    <property type="entry name" value="PPM_2"/>
    <property type="match status" value="1"/>
</dbReference>
<name>P2C26_ORYSJ</name>
<organism>
    <name type="scientific">Oryza sativa subsp. japonica</name>
    <name type="common">Rice</name>
    <dbReference type="NCBI Taxonomy" id="39947"/>
    <lineage>
        <taxon>Eukaryota</taxon>
        <taxon>Viridiplantae</taxon>
        <taxon>Streptophyta</taxon>
        <taxon>Embryophyta</taxon>
        <taxon>Tracheophyta</taxon>
        <taxon>Spermatophyta</taxon>
        <taxon>Magnoliopsida</taxon>
        <taxon>Liliopsida</taxon>
        <taxon>Poales</taxon>
        <taxon>Poaceae</taxon>
        <taxon>BOP clade</taxon>
        <taxon>Oryzoideae</taxon>
        <taxon>Oryzeae</taxon>
        <taxon>Oryzinae</taxon>
        <taxon>Oryza</taxon>
        <taxon>Oryza sativa</taxon>
    </lineage>
</organism>
<comment type="catalytic activity">
    <reaction>
        <text>O-phospho-L-seryl-[protein] + H2O = L-seryl-[protein] + phosphate</text>
        <dbReference type="Rhea" id="RHEA:20629"/>
        <dbReference type="Rhea" id="RHEA-COMP:9863"/>
        <dbReference type="Rhea" id="RHEA-COMP:11604"/>
        <dbReference type="ChEBI" id="CHEBI:15377"/>
        <dbReference type="ChEBI" id="CHEBI:29999"/>
        <dbReference type="ChEBI" id="CHEBI:43474"/>
        <dbReference type="ChEBI" id="CHEBI:83421"/>
        <dbReference type="EC" id="3.1.3.16"/>
    </reaction>
</comment>
<comment type="catalytic activity">
    <reaction>
        <text>O-phospho-L-threonyl-[protein] + H2O = L-threonyl-[protein] + phosphate</text>
        <dbReference type="Rhea" id="RHEA:47004"/>
        <dbReference type="Rhea" id="RHEA-COMP:11060"/>
        <dbReference type="Rhea" id="RHEA-COMP:11605"/>
        <dbReference type="ChEBI" id="CHEBI:15377"/>
        <dbReference type="ChEBI" id="CHEBI:30013"/>
        <dbReference type="ChEBI" id="CHEBI:43474"/>
        <dbReference type="ChEBI" id="CHEBI:61977"/>
        <dbReference type="EC" id="3.1.3.16"/>
    </reaction>
</comment>
<comment type="cofactor">
    <cofactor evidence="1">
        <name>Mg(2+)</name>
        <dbReference type="ChEBI" id="CHEBI:18420"/>
    </cofactor>
    <cofactor evidence="1">
        <name>Mn(2+)</name>
        <dbReference type="ChEBI" id="CHEBI:29035"/>
    </cofactor>
    <text evidence="1">Binds 2 magnesium or manganese ions per subunit.</text>
</comment>
<comment type="similarity">
    <text evidence="4">Belongs to the PP2C family.</text>
</comment>
<proteinExistence type="evidence at transcript level"/>
<protein>
    <recommendedName>
        <fullName>Probable protein phosphatase 2C 26</fullName>
        <shortName>OsPP2C26</shortName>
        <ecNumber>3.1.3.16</ecNumber>
    </recommendedName>
</protein>
<gene>
    <name type="ordered locus">Os02g0690500</name>
    <name type="ordered locus">LOC_Os02g46490</name>
    <name type="ORF">OJ1743_B12.38</name>
    <name type="ORF">OsJ_007725</name>
</gene>
<keyword id="KW-0378">Hydrolase</keyword>
<keyword id="KW-0460">Magnesium</keyword>
<keyword id="KW-0464">Manganese</keyword>
<keyword id="KW-0479">Metal-binding</keyword>
<keyword id="KW-0904">Protein phosphatase</keyword>
<keyword id="KW-1185">Reference proteome</keyword>
<sequence>MGSGASRLLTACTCSRPAPASVDAEPCLDDALGHSFCYAAAATATAHSSSFRHGISGAALSANSSVPVPLYNASAAAGGVAPGYSSAFHTSSSFSSAPLQLSNLSSGPLFLSGPIDRAGQLSGPLDPAVPFSGPLPAKPPKPASSSSRGFSRRFRKPSFGSLRRSVSEKNRPCAVPLRRDDGVQWAHGRAGEDRVHVVVSEDQRWLFVGIYDGFNGPEAPDFLVTNLYRFLLRELRGIFYKEADADNKKLWQFLVDGDDDDSELDFSGSGRFALSLDRLKESRFHMWAHAAADESGREWGSRRLAPAPAVRDHAAVLAALTRALASTEAAYLDMTDQSMGTHPELAVTGACLLVALVRDDNVYVMNLGDSRAIVAQRPDDGDDGCVFGTMRRMEDVGVGLEIETRPGGCAIIGLKPLQLSTDHSTSIEEEVHRIKREHPDDDQCIVNDRVKGRLKVTRAFGAGYLKQAKLNNGLLEMFRNDYIGDTPYISCTPSLCHHKLTARDQFLVLSSDGLYQYLSNEEVVLHVENFMERFPEGDPAQSLIEELLSRAAKKAGMDFYELLDIPQGDRRKYHDDVTVMVISLEGRIWKSSGTYV</sequence>
<accession>Q6ZGY0</accession>
<accession>A0A0N7KFW8</accession>
<evidence type="ECO:0000250" key="1"/>
<evidence type="ECO:0000255" key="2">
    <source>
        <dbReference type="PROSITE-ProRule" id="PRU01082"/>
    </source>
</evidence>
<evidence type="ECO:0000256" key="3">
    <source>
        <dbReference type="SAM" id="MobiDB-lite"/>
    </source>
</evidence>
<evidence type="ECO:0000305" key="4"/>